<protein>
    <recommendedName>
        <fullName evidence="1">DNA mismatch repair protein MutS</fullName>
    </recommendedName>
</protein>
<comment type="function">
    <text evidence="1">This protein is involved in the repair of mismatches in DNA. It is possible that it carries out the mismatch recognition step. This protein has a weak ATPase activity.</text>
</comment>
<comment type="similarity">
    <text evidence="1">Belongs to the DNA mismatch repair MutS family.</text>
</comment>
<sequence>MPEIAQAHTPMMRQYLETKARYPDAILFFRLGDFYEMFFEDALTASEALQITLTARSKGDDKVPMCGVPYHAARGYVARLLEKGFKVAICDQVEEPGKSQLVKREVTRVVTPGMVLDDQVLDPREASWLGAVALEDGRAGLALLDASTGQLQCGEVDGDERLVDELRRAGVRELVFSSAADGARTDAIARAAGAPAARRDAAEFDRAEDRLRKHLGVPSLDGFGVSGLPLGLAAAAAALAYLADTQRATPRHVDRISRLSTDDVLLLDEATRTNLELERTLSGGRKKGTLLALLDRTVTAPGGRRLAEWLRYPLTDLARIGARLDAVEELTGAAVAREELALALRPVADLERLLSRLVLGQGNARDLRALAGALLALPALAGVLEARGAARLREAGARLRGLEALAAHLDAAVAEEPPATLREGGFIRRGHSAELDEIVAIAEDGKGWIAAMEAKERERTGIGSLKVRFNKVFGYYLEVTKPNLHLVPKDWERRQTTVGGERFVTPELKTFEEKVLTAEERRAALEERLFEALRQAVAAEAPRVRTAADAVATADALLSLSRVAAERGYVRPEVDASEALEIVDGRHPVVEAVLPDGPAAYVPNDVLVASRGAPECGEHGALLVITGPNMAGKSTVMRQAALVVLLAQMGAFVPARRARIGLVDRIFTRVGASDDLARGRSTFMVEMTETAAILHNATRRSLVVLDEIGRGTSTFDGVSIAWAVAEHLHDVTGCRTLFATHYHELQDLARERPAVRNLTVAVREVGDRVVFLRKLVQGGASRSYGIEVAKLAGLPAEVLARAREILKNLEAMEVDEGGHPALARGRRRRAGPSAAQLGLFGGGAPADPAAEDVAKAIRAIDLDALRPLDALNLLAGWKKSLE</sequence>
<dbReference type="EMBL" id="CP001359">
    <property type="protein sequence ID" value="ACL65585.1"/>
    <property type="molecule type" value="Genomic_DNA"/>
</dbReference>
<dbReference type="RefSeq" id="WP_012633423.1">
    <property type="nucleotide sequence ID" value="NC_011891.1"/>
</dbReference>
<dbReference type="SMR" id="B8JA66"/>
<dbReference type="KEGG" id="acp:A2cp1_2247"/>
<dbReference type="HOGENOM" id="CLU_002472_3_1_7"/>
<dbReference type="Proteomes" id="UP000007089">
    <property type="component" value="Chromosome"/>
</dbReference>
<dbReference type="GO" id="GO:0005829">
    <property type="term" value="C:cytosol"/>
    <property type="evidence" value="ECO:0007669"/>
    <property type="project" value="TreeGrafter"/>
</dbReference>
<dbReference type="GO" id="GO:0005524">
    <property type="term" value="F:ATP binding"/>
    <property type="evidence" value="ECO:0007669"/>
    <property type="project" value="UniProtKB-UniRule"/>
</dbReference>
<dbReference type="GO" id="GO:0140664">
    <property type="term" value="F:ATP-dependent DNA damage sensor activity"/>
    <property type="evidence" value="ECO:0007669"/>
    <property type="project" value="InterPro"/>
</dbReference>
<dbReference type="GO" id="GO:0003684">
    <property type="term" value="F:damaged DNA binding"/>
    <property type="evidence" value="ECO:0007669"/>
    <property type="project" value="UniProtKB-UniRule"/>
</dbReference>
<dbReference type="GO" id="GO:0030983">
    <property type="term" value="F:mismatched DNA binding"/>
    <property type="evidence" value="ECO:0007669"/>
    <property type="project" value="InterPro"/>
</dbReference>
<dbReference type="GO" id="GO:0006298">
    <property type="term" value="P:mismatch repair"/>
    <property type="evidence" value="ECO:0007669"/>
    <property type="project" value="UniProtKB-UniRule"/>
</dbReference>
<dbReference type="CDD" id="cd03284">
    <property type="entry name" value="ABC_MutS1"/>
    <property type="match status" value="1"/>
</dbReference>
<dbReference type="FunFam" id="3.40.1170.10:FF:000001">
    <property type="entry name" value="DNA mismatch repair protein MutS"/>
    <property type="match status" value="1"/>
</dbReference>
<dbReference type="FunFam" id="3.40.50.300:FF:000870">
    <property type="entry name" value="MutS protein homolog 4"/>
    <property type="match status" value="1"/>
</dbReference>
<dbReference type="Gene3D" id="1.10.1420.10">
    <property type="match status" value="2"/>
</dbReference>
<dbReference type="Gene3D" id="3.40.1170.10">
    <property type="entry name" value="DNA repair protein MutS, domain I"/>
    <property type="match status" value="1"/>
</dbReference>
<dbReference type="Gene3D" id="3.30.420.110">
    <property type="entry name" value="MutS, connector domain"/>
    <property type="match status" value="1"/>
</dbReference>
<dbReference type="Gene3D" id="3.40.50.300">
    <property type="entry name" value="P-loop containing nucleotide triphosphate hydrolases"/>
    <property type="match status" value="1"/>
</dbReference>
<dbReference type="HAMAP" id="MF_00096">
    <property type="entry name" value="MutS"/>
    <property type="match status" value="1"/>
</dbReference>
<dbReference type="InterPro" id="IPR005748">
    <property type="entry name" value="DNA_mismatch_repair_MutS"/>
</dbReference>
<dbReference type="InterPro" id="IPR007695">
    <property type="entry name" value="DNA_mismatch_repair_MutS-lik_N"/>
</dbReference>
<dbReference type="InterPro" id="IPR017261">
    <property type="entry name" value="DNA_mismatch_repair_MutS/MSH"/>
</dbReference>
<dbReference type="InterPro" id="IPR000432">
    <property type="entry name" value="DNA_mismatch_repair_MutS_C"/>
</dbReference>
<dbReference type="InterPro" id="IPR007861">
    <property type="entry name" value="DNA_mismatch_repair_MutS_clamp"/>
</dbReference>
<dbReference type="InterPro" id="IPR007696">
    <property type="entry name" value="DNA_mismatch_repair_MutS_core"/>
</dbReference>
<dbReference type="InterPro" id="IPR016151">
    <property type="entry name" value="DNA_mismatch_repair_MutS_N"/>
</dbReference>
<dbReference type="InterPro" id="IPR036187">
    <property type="entry name" value="DNA_mismatch_repair_MutS_sf"/>
</dbReference>
<dbReference type="InterPro" id="IPR007860">
    <property type="entry name" value="DNA_mmatch_repair_MutS_con_dom"/>
</dbReference>
<dbReference type="InterPro" id="IPR045076">
    <property type="entry name" value="MutS"/>
</dbReference>
<dbReference type="InterPro" id="IPR036678">
    <property type="entry name" value="MutS_con_dom_sf"/>
</dbReference>
<dbReference type="InterPro" id="IPR027417">
    <property type="entry name" value="P-loop_NTPase"/>
</dbReference>
<dbReference type="NCBIfam" id="TIGR01070">
    <property type="entry name" value="mutS1"/>
    <property type="match status" value="1"/>
</dbReference>
<dbReference type="NCBIfam" id="NF003810">
    <property type="entry name" value="PRK05399.1"/>
    <property type="match status" value="1"/>
</dbReference>
<dbReference type="PANTHER" id="PTHR11361:SF34">
    <property type="entry name" value="DNA MISMATCH REPAIR PROTEIN MSH1, MITOCHONDRIAL"/>
    <property type="match status" value="1"/>
</dbReference>
<dbReference type="PANTHER" id="PTHR11361">
    <property type="entry name" value="DNA MISMATCH REPAIR PROTEIN MUTS FAMILY MEMBER"/>
    <property type="match status" value="1"/>
</dbReference>
<dbReference type="Pfam" id="PF01624">
    <property type="entry name" value="MutS_I"/>
    <property type="match status" value="1"/>
</dbReference>
<dbReference type="Pfam" id="PF05188">
    <property type="entry name" value="MutS_II"/>
    <property type="match status" value="1"/>
</dbReference>
<dbReference type="Pfam" id="PF05192">
    <property type="entry name" value="MutS_III"/>
    <property type="match status" value="1"/>
</dbReference>
<dbReference type="Pfam" id="PF05190">
    <property type="entry name" value="MutS_IV"/>
    <property type="match status" value="1"/>
</dbReference>
<dbReference type="Pfam" id="PF00488">
    <property type="entry name" value="MutS_V"/>
    <property type="match status" value="1"/>
</dbReference>
<dbReference type="PIRSF" id="PIRSF037677">
    <property type="entry name" value="DNA_mis_repair_Msh6"/>
    <property type="match status" value="1"/>
</dbReference>
<dbReference type="SMART" id="SM00534">
    <property type="entry name" value="MUTSac"/>
    <property type="match status" value="1"/>
</dbReference>
<dbReference type="SMART" id="SM00533">
    <property type="entry name" value="MUTSd"/>
    <property type="match status" value="1"/>
</dbReference>
<dbReference type="SUPFAM" id="SSF55271">
    <property type="entry name" value="DNA repair protein MutS, domain I"/>
    <property type="match status" value="1"/>
</dbReference>
<dbReference type="SUPFAM" id="SSF53150">
    <property type="entry name" value="DNA repair protein MutS, domain II"/>
    <property type="match status" value="1"/>
</dbReference>
<dbReference type="SUPFAM" id="SSF48334">
    <property type="entry name" value="DNA repair protein MutS, domain III"/>
    <property type="match status" value="1"/>
</dbReference>
<dbReference type="SUPFAM" id="SSF52540">
    <property type="entry name" value="P-loop containing nucleoside triphosphate hydrolases"/>
    <property type="match status" value="1"/>
</dbReference>
<dbReference type="PROSITE" id="PS00486">
    <property type="entry name" value="DNA_MISMATCH_REPAIR_2"/>
    <property type="match status" value="1"/>
</dbReference>
<proteinExistence type="inferred from homology"/>
<evidence type="ECO:0000255" key="1">
    <source>
        <dbReference type="HAMAP-Rule" id="MF_00096"/>
    </source>
</evidence>
<reference key="1">
    <citation type="submission" date="2009-01" db="EMBL/GenBank/DDBJ databases">
        <title>Complete sequence of Anaeromyxobacter dehalogenans 2CP-1.</title>
        <authorList>
            <person name="Lucas S."/>
            <person name="Copeland A."/>
            <person name="Lapidus A."/>
            <person name="Glavina del Rio T."/>
            <person name="Dalin E."/>
            <person name="Tice H."/>
            <person name="Bruce D."/>
            <person name="Goodwin L."/>
            <person name="Pitluck S."/>
            <person name="Saunders E."/>
            <person name="Brettin T."/>
            <person name="Detter J.C."/>
            <person name="Han C."/>
            <person name="Larimer F."/>
            <person name="Land M."/>
            <person name="Hauser L."/>
            <person name="Kyrpides N."/>
            <person name="Ovchinnikova G."/>
            <person name="Beliaev A.S."/>
            <person name="Richardson P."/>
        </authorList>
    </citation>
    <scope>NUCLEOTIDE SEQUENCE [LARGE SCALE GENOMIC DNA]</scope>
    <source>
        <strain>2CP-1 / ATCC BAA-258</strain>
    </source>
</reference>
<accession>B8JA66</accession>
<organism>
    <name type="scientific">Anaeromyxobacter dehalogenans (strain 2CP-1 / ATCC BAA-258)</name>
    <dbReference type="NCBI Taxonomy" id="455488"/>
    <lineage>
        <taxon>Bacteria</taxon>
        <taxon>Pseudomonadati</taxon>
        <taxon>Myxococcota</taxon>
        <taxon>Myxococcia</taxon>
        <taxon>Myxococcales</taxon>
        <taxon>Cystobacterineae</taxon>
        <taxon>Anaeromyxobacteraceae</taxon>
        <taxon>Anaeromyxobacter</taxon>
    </lineage>
</organism>
<name>MUTS_ANAD2</name>
<gene>
    <name evidence="1" type="primary">mutS</name>
    <name type="ordered locus">A2cp1_2247</name>
</gene>
<feature type="chain" id="PRO_1000192193" description="DNA mismatch repair protein MutS">
    <location>
        <begin position="1"/>
        <end position="882"/>
    </location>
</feature>
<feature type="binding site" evidence="1">
    <location>
        <begin position="627"/>
        <end position="634"/>
    </location>
    <ligand>
        <name>ATP</name>
        <dbReference type="ChEBI" id="CHEBI:30616"/>
    </ligand>
</feature>
<keyword id="KW-0067">ATP-binding</keyword>
<keyword id="KW-0227">DNA damage</keyword>
<keyword id="KW-0234">DNA repair</keyword>
<keyword id="KW-0238">DNA-binding</keyword>
<keyword id="KW-0547">Nucleotide-binding</keyword>